<reference key="1">
    <citation type="journal article" date="2002" name="Nature">
        <title>The genome sequence of Schizosaccharomyces pombe.</title>
        <authorList>
            <person name="Wood V."/>
            <person name="Gwilliam R."/>
            <person name="Rajandream M.A."/>
            <person name="Lyne M.H."/>
            <person name="Lyne R."/>
            <person name="Stewart A."/>
            <person name="Sgouros J.G."/>
            <person name="Peat N."/>
            <person name="Hayles J."/>
            <person name="Baker S.G."/>
            <person name="Basham D."/>
            <person name="Bowman S."/>
            <person name="Brooks K."/>
            <person name="Brown D."/>
            <person name="Brown S."/>
            <person name="Chillingworth T."/>
            <person name="Churcher C.M."/>
            <person name="Collins M."/>
            <person name="Connor R."/>
            <person name="Cronin A."/>
            <person name="Davis P."/>
            <person name="Feltwell T."/>
            <person name="Fraser A."/>
            <person name="Gentles S."/>
            <person name="Goble A."/>
            <person name="Hamlin N."/>
            <person name="Harris D.E."/>
            <person name="Hidalgo J."/>
            <person name="Hodgson G."/>
            <person name="Holroyd S."/>
            <person name="Hornsby T."/>
            <person name="Howarth S."/>
            <person name="Huckle E.J."/>
            <person name="Hunt S."/>
            <person name="Jagels K."/>
            <person name="James K.D."/>
            <person name="Jones L."/>
            <person name="Jones M."/>
            <person name="Leather S."/>
            <person name="McDonald S."/>
            <person name="McLean J."/>
            <person name="Mooney P."/>
            <person name="Moule S."/>
            <person name="Mungall K.L."/>
            <person name="Murphy L.D."/>
            <person name="Niblett D."/>
            <person name="Odell C."/>
            <person name="Oliver K."/>
            <person name="O'Neil S."/>
            <person name="Pearson D."/>
            <person name="Quail M.A."/>
            <person name="Rabbinowitsch E."/>
            <person name="Rutherford K.M."/>
            <person name="Rutter S."/>
            <person name="Saunders D."/>
            <person name="Seeger K."/>
            <person name="Sharp S."/>
            <person name="Skelton J."/>
            <person name="Simmonds M.N."/>
            <person name="Squares R."/>
            <person name="Squares S."/>
            <person name="Stevens K."/>
            <person name="Taylor K."/>
            <person name="Taylor R.G."/>
            <person name="Tivey A."/>
            <person name="Walsh S.V."/>
            <person name="Warren T."/>
            <person name="Whitehead S."/>
            <person name="Woodward J.R."/>
            <person name="Volckaert G."/>
            <person name="Aert R."/>
            <person name="Robben J."/>
            <person name="Grymonprez B."/>
            <person name="Weltjens I."/>
            <person name="Vanstreels E."/>
            <person name="Rieger M."/>
            <person name="Schaefer M."/>
            <person name="Mueller-Auer S."/>
            <person name="Gabel C."/>
            <person name="Fuchs M."/>
            <person name="Duesterhoeft A."/>
            <person name="Fritzc C."/>
            <person name="Holzer E."/>
            <person name="Moestl D."/>
            <person name="Hilbert H."/>
            <person name="Borzym K."/>
            <person name="Langer I."/>
            <person name="Beck A."/>
            <person name="Lehrach H."/>
            <person name="Reinhardt R."/>
            <person name="Pohl T.M."/>
            <person name="Eger P."/>
            <person name="Zimmermann W."/>
            <person name="Wedler H."/>
            <person name="Wambutt R."/>
            <person name="Purnelle B."/>
            <person name="Goffeau A."/>
            <person name="Cadieu E."/>
            <person name="Dreano S."/>
            <person name="Gloux S."/>
            <person name="Lelaure V."/>
            <person name="Mottier S."/>
            <person name="Galibert F."/>
            <person name="Aves S.J."/>
            <person name="Xiang Z."/>
            <person name="Hunt C."/>
            <person name="Moore K."/>
            <person name="Hurst S.M."/>
            <person name="Lucas M."/>
            <person name="Rochet M."/>
            <person name="Gaillardin C."/>
            <person name="Tallada V.A."/>
            <person name="Garzon A."/>
            <person name="Thode G."/>
            <person name="Daga R.R."/>
            <person name="Cruzado L."/>
            <person name="Jimenez J."/>
            <person name="Sanchez M."/>
            <person name="del Rey F."/>
            <person name="Benito J."/>
            <person name="Dominguez A."/>
            <person name="Revuelta J.L."/>
            <person name="Moreno S."/>
            <person name="Armstrong J."/>
            <person name="Forsburg S.L."/>
            <person name="Cerutti L."/>
            <person name="Lowe T."/>
            <person name="McCombie W.R."/>
            <person name="Paulsen I."/>
            <person name="Potashkin J."/>
            <person name="Shpakovski G.V."/>
            <person name="Ussery D."/>
            <person name="Barrell B.G."/>
            <person name="Nurse P."/>
        </authorList>
    </citation>
    <scope>NUCLEOTIDE SEQUENCE [LARGE SCALE GENOMIC DNA]</scope>
    <source>
        <strain>972 / ATCC 24843</strain>
    </source>
</reference>
<reference key="2">
    <citation type="journal article" date="2003" name="Mol. Cell. Biol.">
        <title>Schizosaccharomyces pombe checkpoint response to DNA interstrand cross-links.</title>
        <authorList>
            <person name="Lambert S."/>
            <person name="Mason S.J."/>
            <person name="Barber L.J."/>
            <person name="Hartley J.A."/>
            <person name="Pearce J.A."/>
            <person name="Carr A.M."/>
            <person name="McHugh P.J."/>
        </authorList>
    </citation>
    <scope>FUNCTION</scope>
</reference>
<feature type="chain" id="PRO_0000209129" description="DNA cross-link repair protein pso2/snm1">
    <location>
        <begin position="1"/>
        <end position="560"/>
    </location>
</feature>
<feature type="zinc finger region" description="UBZ4-type" evidence="2">
    <location>
        <begin position="106"/>
        <end position="135"/>
    </location>
</feature>
<feature type="binding site" evidence="2">
    <location>
        <position position="109"/>
    </location>
    <ligand>
        <name>Zn(2+)</name>
        <dbReference type="ChEBI" id="CHEBI:29105"/>
    </ligand>
</feature>
<feature type="binding site" evidence="2">
    <location>
        <position position="112"/>
    </location>
    <ligand>
        <name>Zn(2+)</name>
        <dbReference type="ChEBI" id="CHEBI:29105"/>
    </ligand>
</feature>
<feature type="binding site" evidence="2">
    <location>
        <position position="126"/>
    </location>
    <ligand>
        <name>Zn(2+)</name>
        <dbReference type="ChEBI" id="CHEBI:29105"/>
    </ligand>
</feature>
<feature type="binding site" evidence="2">
    <location>
        <position position="130"/>
    </location>
    <ligand>
        <name>Zn(2+)</name>
        <dbReference type="ChEBI" id="CHEBI:29105"/>
    </ligand>
</feature>
<name>PSO2_SCHPO</name>
<sequence length="560" mass="63076">MSKRKSSSILDFFKKSNNGKNMWGNEAVSVEKTDSTTKPSTVKNAISSSQIKNEKFSQEVLLQFNDPSFTSEVGESPQWQSFGDANILEPLKNELVKNEESTMSELLLCPICGITLESLTVDANIHVNDCLDGRTTEAVSKKLKKDSVVKADPSNSSTFPISDSCKQALLPLPGKQINVRSVVPFYKLMPYNIPFAVDAFAYGAIDGVEAYFLSHFHSDHYGGLTPKWKHGPIYCSEVTGNLLINVMHVDEQYVKRLKLNQPYNIMGITVYVLDANHCPGSAMFVFETLQSNQTRRVLHCGDFRASKDHVMHPVLREKTIHKVYLDTTYLNPKYTFPPQADVVQACADKAISIKKSTDSRLLVVVSTYSIGKEKVAVAIAKSLSSRIYVVPRKMHIIKQLENQDLIDLLTDDPTQASVHMVTMMGIHPNSLLDYLEQYNSSFDKIIGYKVTGWTFQPLENRAQLSSSLDSIISRPPKFVEYDLRAIRGSTDKVAAFVAPYSEHSSFYDLTMFCLSMNIGHIIPTVNVGSQRSREKMNVWLDRWAWRRKKQGLLSLENVDW</sequence>
<proteinExistence type="inferred from homology"/>
<organism>
    <name type="scientific">Schizosaccharomyces pombe (strain 972 / ATCC 24843)</name>
    <name type="common">Fission yeast</name>
    <dbReference type="NCBI Taxonomy" id="284812"/>
    <lineage>
        <taxon>Eukaryota</taxon>
        <taxon>Fungi</taxon>
        <taxon>Dikarya</taxon>
        <taxon>Ascomycota</taxon>
        <taxon>Taphrinomycotina</taxon>
        <taxon>Schizosaccharomycetes</taxon>
        <taxon>Schizosaccharomycetales</taxon>
        <taxon>Schizosaccharomycetaceae</taxon>
        <taxon>Schizosaccharomyces</taxon>
    </lineage>
</organism>
<comment type="function">
    <text evidence="3">Required for DNA interstrand cross-link repair. This requires cleavage of cross-linked DNA to generate DNA double strand breaks (DSBs). This protein may have 5' exonuclease activity on single-stranded and double-stranded DNA, which could be necessary for the processing of DNA double strand breaks prior to religation.</text>
</comment>
<comment type="subcellular location">
    <subcellularLocation>
        <location evidence="1">Nucleus</location>
    </subcellularLocation>
</comment>
<comment type="similarity">
    <text evidence="4">Belongs to the DNA repair metallo-beta-lactamase (DRMBL) family.</text>
</comment>
<keyword id="KW-0227">DNA damage</keyword>
<keyword id="KW-0234">DNA repair</keyword>
<keyword id="KW-0269">Exonuclease</keyword>
<keyword id="KW-0378">Hydrolase</keyword>
<keyword id="KW-0460">Magnesium</keyword>
<keyword id="KW-0479">Metal-binding</keyword>
<keyword id="KW-0540">Nuclease</keyword>
<keyword id="KW-0539">Nucleus</keyword>
<keyword id="KW-1185">Reference proteome</keyword>
<keyword id="KW-0862">Zinc</keyword>
<keyword id="KW-0863">Zinc-finger</keyword>
<protein>
    <recommendedName>
        <fullName>DNA cross-link repair protein pso2/snm1</fullName>
        <ecNumber>3.1.-.-</ecNumber>
    </recommendedName>
</protein>
<evidence type="ECO:0000250" key="1"/>
<evidence type="ECO:0000255" key="2">
    <source>
        <dbReference type="PROSITE-ProRule" id="PRU01256"/>
    </source>
</evidence>
<evidence type="ECO:0000269" key="3">
    <source>
    </source>
</evidence>
<evidence type="ECO:0000305" key="4"/>
<accession>Q10264</accession>
<accession>O13893</accession>
<gene>
    <name type="primary">pso2</name>
    <name type="synonym">snm1</name>
    <name type="ORF">SPAC22A12.01c</name>
    <name type="ORF">SPAC56F8.17c</name>
</gene>
<dbReference type="EC" id="3.1.-.-"/>
<dbReference type="EMBL" id="CU329670">
    <property type="protein sequence ID" value="CAA93588.2"/>
    <property type="molecule type" value="Genomic_DNA"/>
</dbReference>
<dbReference type="PIR" id="T38927">
    <property type="entry name" value="T38927"/>
</dbReference>
<dbReference type="RefSeq" id="NP_593231.2">
    <property type="nucleotide sequence ID" value="NM_001018628.2"/>
</dbReference>
<dbReference type="SMR" id="Q10264"/>
<dbReference type="BioGRID" id="278005">
    <property type="interactions" value="24"/>
</dbReference>
<dbReference type="FunCoup" id="Q10264">
    <property type="interactions" value="390"/>
</dbReference>
<dbReference type="STRING" id="284812.Q10264"/>
<dbReference type="iPTMnet" id="Q10264"/>
<dbReference type="PaxDb" id="4896-SPAC22A12.01c.1"/>
<dbReference type="EnsemblFungi" id="SPAC22A12.01c.1">
    <property type="protein sequence ID" value="SPAC22A12.01c.1:pep"/>
    <property type="gene ID" value="SPAC22A12.01c"/>
</dbReference>
<dbReference type="GeneID" id="2541503"/>
<dbReference type="KEGG" id="spo:2541503"/>
<dbReference type="PomBase" id="SPAC22A12.01c">
    <property type="gene designation" value="pso2"/>
</dbReference>
<dbReference type="VEuPathDB" id="FungiDB:SPAC22A12.01c"/>
<dbReference type="eggNOG" id="KOG1361">
    <property type="taxonomic scope" value="Eukaryota"/>
</dbReference>
<dbReference type="HOGENOM" id="CLU_005260_4_1_1"/>
<dbReference type="InParanoid" id="Q10264"/>
<dbReference type="OMA" id="KSGPIYC"/>
<dbReference type="PhylomeDB" id="Q10264"/>
<dbReference type="PRO" id="PR:Q10264"/>
<dbReference type="Proteomes" id="UP000002485">
    <property type="component" value="Chromosome I"/>
</dbReference>
<dbReference type="GO" id="GO:0005634">
    <property type="term" value="C:nucleus"/>
    <property type="evidence" value="ECO:0007005"/>
    <property type="project" value="PomBase"/>
</dbReference>
<dbReference type="GO" id="GO:0035312">
    <property type="term" value="F:5'-3' DNA exonuclease activity"/>
    <property type="evidence" value="ECO:0000318"/>
    <property type="project" value="GO_Central"/>
</dbReference>
<dbReference type="GO" id="GO:0003684">
    <property type="term" value="F:damaged DNA binding"/>
    <property type="evidence" value="ECO:0000318"/>
    <property type="project" value="GO_Central"/>
</dbReference>
<dbReference type="GO" id="GO:0008270">
    <property type="term" value="F:zinc ion binding"/>
    <property type="evidence" value="ECO:0007669"/>
    <property type="project" value="UniProtKB-KW"/>
</dbReference>
<dbReference type="GO" id="GO:0006281">
    <property type="term" value="P:DNA repair"/>
    <property type="evidence" value="ECO:0000315"/>
    <property type="project" value="PomBase"/>
</dbReference>
<dbReference type="GO" id="GO:0006303">
    <property type="term" value="P:double-strand break repair via nonhomologous end joining"/>
    <property type="evidence" value="ECO:0000318"/>
    <property type="project" value="GO_Central"/>
</dbReference>
<dbReference type="GO" id="GO:0036297">
    <property type="term" value="P:interstrand cross-link repair"/>
    <property type="evidence" value="ECO:0000318"/>
    <property type="project" value="GO_Central"/>
</dbReference>
<dbReference type="GO" id="GO:1901255">
    <property type="term" value="P:nucleotide-excision repair involved in interstrand cross-link repair"/>
    <property type="evidence" value="ECO:0000315"/>
    <property type="project" value="PomBase"/>
</dbReference>
<dbReference type="CDD" id="cd16273">
    <property type="entry name" value="SNM1A-1C-like_MBL-fold"/>
    <property type="match status" value="1"/>
</dbReference>
<dbReference type="FunFam" id="3.40.50.12650:FF:000001">
    <property type="entry name" value="DNA cross-link repair 1A"/>
    <property type="match status" value="1"/>
</dbReference>
<dbReference type="FunFam" id="3.60.15.10:FF:000010">
    <property type="entry name" value="DNA cross-link repair 1A"/>
    <property type="match status" value="1"/>
</dbReference>
<dbReference type="Gene3D" id="3.40.50.12650">
    <property type="match status" value="1"/>
</dbReference>
<dbReference type="Gene3D" id="3.60.15.10">
    <property type="entry name" value="Ribonuclease Z/Hydroxyacylglutathione hydrolase-like"/>
    <property type="match status" value="1"/>
</dbReference>
<dbReference type="InterPro" id="IPR011084">
    <property type="entry name" value="DRMBL"/>
</dbReference>
<dbReference type="InterPro" id="IPR006642">
    <property type="entry name" value="Rad18_UBZ4"/>
</dbReference>
<dbReference type="InterPro" id="IPR036866">
    <property type="entry name" value="RibonucZ/Hydroxyglut_hydro"/>
</dbReference>
<dbReference type="PANTHER" id="PTHR23240:SF6">
    <property type="entry name" value="DNA CROSS-LINK REPAIR 1A PROTEIN"/>
    <property type="match status" value="1"/>
</dbReference>
<dbReference type="PANTHER" id="PTHR23240">
    <property type="entry name" value="DNA CROSS-LINK REPAIR PROTEIN PSO2/SNM1-RELATED"/>
    <property type="match status" value="1"/>
</dbReference>
<dbReference type="Pfam" id="PF07522">
    <property type="entry name" value="DRMBL"/>
    <property type="match status" value="1"/>
</dbReference>
<dbReference type="SUPFAM" id="SSF56281">
    <property type="entry name" value="Metallo-hydrolase/oxidoreductase"/>
    <property type="match status" value="1"/>
</dbReference>
<dbReference type="PROSITE" id="PS51908">
    <property type="entry name" value="ZF_UBZ4"/>
    <property type="match status" value="1"/>
</dbReference>